<reference key="1">
    <citation type="journal article" date="2006" name="Genome Biol.">
        <title>The genome of Rhizobium leguminosarum has recognizable core and accessory components.</title>
        <authorList>
            <person name="Young J.P.W."/>
            <person name="Crossman L.C."/>
            <person name="Johnston A.W.B."/>
            <person name="Thomson N.R."/>
            <person name="Ghazoui Z.F."/>
            <person name="Hull K.H."/>
            <person name="Wexler M."/>
            <person name="Curson A.R.J."/>
            <person name="Todd J.D."/>
            <person name="Poole P.S."/>
            <person name="Mauchline T.H."/>
            <person name="East A.K."/>
            <person name="Quail M.A."/>
            <person name="Churcher C."/>
            <person name="Arrowsmith C."/>
            <person name="Cherevach I."/>
            <person name="Chillingworth T."/>
            <person name="Clarke K."/>
            <person name="Cronin A."/>
            <person name="Davis P."/>
            <person name="Fraser A."/>
            <person name="Hance Z."/>
            <person name="Hauser H."/>
            <person name="Jagels K."/>
            <person name="Moule S."/>
            <person name="Mungall K."/>
            <person name="Norbertczak H."/>
            <person name="Rabbinowitsch E."/>
            <person name="Sanders M."/>
            <person name="Simmonds M."/>
            <person name="Whitehead S."/>
            <person name="Parkhill J."/>
        </authorList>
    </citation>
    <scope>NUCLEOTIDE SEQUENCE [LARGE SCALE GENOMIC DNA]</scope>
    <source>
        <strain>DSM 114642 / LMG 32736 / 3841</strain>
    </source>
</reference>
<keyword id="KW-0963">Cytoplasm</keyword>
<keyword id="KW-0312">Gluconeogenesis</keyword>
<keyword id="KW-0324">Glycolysis</keyword>
<keyword id="KW-0413">Isomerase</keyword>
<sequence>MNAIVEQLKSTADATKATDIRAAFAADSQRFSRFSVSLDDLLMDFSKTAVNDDILKLLVKLAEEGGVEKKREEMFSGKAINFTEDRAVLHTALRNRSNAPVLVDGKDVMPDVNAVLAAMGKFADDVRSGTLKGATGKAITDVVNIGIGGSDLGPVMATLALAPFHDGPRAHFVSNIDGAHIADILKLVQPETTLFIVASKTFTTVETMTNAQTARNFIAKALGEAAVQHHFAAVSTALDKVAAFGIDSARVFGFWDWVGGRYSIWSAIGLPLMIAVGPENFGKFLDGAHAVDNHFRKAPITENLPILLGLIGFYHRNVLGYPTRAILPYDQRLSRFPAYLQQLDMESNGKGVTIDGTPVEGNSGPVVWGEPGTNGQHAFYQLIHQGTSIIPAEFMIAANAFEPELRHQHQLLISNVLAQSEALMKGRTFAEAKKQLTDKGMDDKKADFIAPHRVFTGNRPSITFVYDKLTPYALGRLIALYEHRVFVEGVLFRINSFDQWGVELGKELATGLLPVVEGKESAASHDSSTQGLVAALAKLAK</sequence>
<proteinExistence type="inferred from homology"/>
<accession>Q1MM06</accession>
<name>G6PI_RHIJ3</name>
<feature type="chain" id="PRO_0000252636" description="Glucose-6-phosphate isomerase">
    <location>
        <begin position="1"/>
        <end position="541"/>
    </location>
</feature>
<feature type="active site" description="Proton donor" evidence="1">
    <location>
        <position position="346"/>
    </location>
</feature>
<feature type="active site" evidence="1">
    <location>
        <position position="377"/>
    </location>
</feature>
<feature type="active site" evidence="1">
    <location>
        <position position="506"/>
    </location>
</feature>
<organism>
    <name type="scientific">Rhizobium johnstonii (strain DSM 114642 / LMG 32736 / 3841)</name>
    <name type="common">Rhizobium leguminosarum bv. viciae</name>
    <dbReference type="NCBI Taxonomy" id="216596"/>
    <lineage>
        <taxon>Bacteria</taxon>
        <taxon>Pseudomonadati</taxon>
        <taxon>Pseudomonadota</taxon>
        <taxon>Alphaproteobacteria</taxon>
        <taxon>Hyphomicrobiales</taxon>
        <taxon>Rhizobiaceae</taxon>
        <taxon>Rhizobium/Agrobacterium group</taxon>
        <taxon>Rhizobium</taxon>
        <taxon>Rhizobium johnstonii</taxon>
    </lineage>
</organism>
<dbReference type="EC" id="5.3.1.9" evidence="1"/>
<dbReference type="EMBL" id="AM236080">
    <property type="protein sequence ID" value="CAK05997.1"/>
    <property type="status" value="ALT_INIT"/>
    <property type="molecule type" value="Genomic_DNA"/>
</dbReference>
<dbReference type="RefSeq" id="WP_028740477.1">
    <property type="nucleotide sequence ID" value="NC_008380.1"/>
</dbReference>
<dbReference type="SMR" id="Q1MM06"/>
<dbReference type="EnsemblBacteria" id="CAK05997">
    <property type="protein sequence ID" value="CAK05997"/>
    <property type="gene ID" value="RL0504"/>
</dbReference>
<dbReference type="KEGG" id="rle:RL0504"/>
<dbReference type="eggNOG" id="COG0166">
    <property type="taxonomic scope" value="Bacteria"/>
</dbReference>
<dbReference type="HOGENOM" id="CLU_017947_3_1_5"/>
<dbReference type="UniPathway" id="UPA00109">
    <property type="reaction ID" value="UER00181"/>
</dbReference>
<dbReference type="UniPathway" id="UPA00138"/>
<dbReference type="Proteomes" id="UP000006575">
    <property type="component" value="Chromosome"/>
</dbReference>
<dbReference type="GO" id="GO:0005829">
    <property type="term" value="C:cytosol"/>
    <property type="evidence" value="ECO:0007669"/>
    <property type="project" value="TreeGrafter"/>
</dbReference>
<dbReference type="GO" id="GO:0097367">
    <property type="term" value="F:carbohydrate derivative binding"/>
    <property type="evidence" value="ECO:0007669"/>
    <property type="project" value="InterPro"/>
</dbReference>
<dbReference type="GO" id="GO:0004347">
    <property type="term" value="F:glucose-6-phosphate isomerase activity"/>
    <property type="evidence" value="ECO:0007669"/>
    <property type="project" value="UniProtKB-UniRule"/>
</dbReference>
<dbReference type="GO" id="GO:0048029">
    <property type="term" value="F:monosaccharide binding"/>
    <property type="evidence" value="ECO:0007669"/>
    <property type="project" value="TreeGrafter"/>
</dbReference>
<dbReference type="GO" id="GO:0006094">
    <property type="term" value="P:gluconeogenesis"/>
    <property type="evidence" value="ECO:0007669"/>
    <property type="project" value="UniProtKB-UniRule"/>
</dbReference>
<dbReference type="GO" id="GO:0051156">
    <property type="term" value="P:glucose 6-phosphate metabolic process"/>
    <property type="evidence" value="ECO:0007669"/>
    <property type="project" value="TreeGrafter"/>
</dbReference>
<dbReference type="GO" id="GO:0006096">
    <property type="term" value="P:glycolytic process"/>
    <property type="evidence" value="ECO:0007669"/>
    <property type="project" value="UniProtKB-UniRule"/>
</dbReference>
<dbReference type="CDD" id="cd05015">
    <property type="entry name" value="SIS_PGI_1"/>
    <property type="match status" value="1"/>
</dbReference>
<dbReference type="CDD" id="cd05016">
    <property type="entry name" value="SIS_PGI_2"/>
    <property type="match status" value="1"/>
</dbReference>
<dbReference type="FunFam" id="3.40.50.10490:FF:000018">
    <property type="entry name" value="Glucose-6-phosphate isomerase"/>
    <property type="match status" value="1"/>
</dbReference>
<dbReference type="Gene3D" id="1.10.1390.10">
    <property type="match status" value="1"/>
</dbReference>
<dbReference type="Gene3D" id="3.40.50.10490">
    <property type="entry name" value="Glucose-6-phosphate isomerase like protein, domain 1"/>
    <property type="match status" value="2"/>
</dbReference>
<dbReference type="HAMAP" id="MF_00473">
    <property type="entry name" value="G6P_isomerase"/>
    <property type="match status" value="1"/>
</dbReference>
<dbReference type="InterPro" id="IPR001672">
    <property type="entry name" value="G6P_Isomerase"/>
</dbReference>
<dbReference type="InterPro" id="IPR023096">
    <property type="entry name" value="G6P_Isomerase_C"/>
</dbReference>
<dbReference type="InterPro" id="IPR018189">
    <property type="entry name" value="Phosphoglucose_isomerase_CS"/>
</dbReference>
<dbReference type="InterPro" id="IPR046348">
    <property type="entry name" value="SIS_dom_sf"/>
</dbReference>
<dbReference type="InterPro" id="IPR035476">
    <property type="entry name" value="SIS_PGI_1"/>
</dbReference>
<dbReference type="InterPro" id="IPR035482">
    <property type="entry name" value="SIS_PGI_2"/>
</dbReference>
<dbReference type="NCBIfam" id="NF001211">
    <property type="entry name" value="PRK00179.1"/>
    <property type="match status" value="1"/>
</dbReference>
<dbReference type="PANTHER" id="PTHR11469">
    <property type="entry name" value="GLUCOSE-6-PHOSPHATE ISOMERASE"/>
    <property type="match status" value="1"/>
</dbReference>
<dbReference type="PANTHER" id="PTHR11469:SF1">
    <property type="entry name" value="GLUCOSE-6-PHOSPHATE ISOMERASE"/>
    <property type="match status" value="1"/>
</dbReference>
<dbReference type="Pfam" id="PF00342">
    <property type="entry name" value="PGI"/>
    <property type="match status" value="1"/>
</dbReference>
<dbReference type="PRINTS" id="PR00662">
    <property type="entry name" value="G6PISOMERASE"/>
</dbReference>
<dbReference type="SUPFAM" id="SSF53697">
    <property type="entry name" value="SIS domain"/>
    <property type="match status" value="1"/>
</dbReference>
<dbReference type="PROSITE" id="PS00765">
    <property type="entry name" value="P_GLUCOSE_ISOMERASE_1"/>
    <property type="match status" value="1"/>
</dbReference>
<dbReference type="PROSITE" id="PS00174">
    <property type="entry name" value="P_GLUCOSE_ISOMERASE_2"/>
    <property type="match status" value="1"/>
</dbReference>
<dbReference type="PROSITE" id="PS51463">
    <property type="entry name" value="P_GLUCOSE_ISOMERASE_3"/>
    <property type="match status" value="1"/>
</dbReference>
<evidence type="ECO:0000255" key="1">
    <source>
        <dbReference type="HAMAP-Rule" id="MF_00473"/>
    </source>
</evidence>
<evidence type="ECO:0000305" key="2"/>
<gene>
    <name evidence="1" type="primary">pgi</name>
    <name type="ordered locus">RL0504</name>
</gene>
<protein>
    <recommendedName>
        <fullName evidence="1">Glucose-6-phosphate isomerase</fullName>
        <shortName evidence="1">GPI</shortName>
        <ecNumber evidence="1">5.3.1.9</ecNumber>
    </recommendedName>
    <alternativeName>
        <fullName evidence="1">Phosphoglucose isomerase</fullName>
        <shortName evidence="1">PGI</shortName>
    </alternativeName>
    <alternativeName>
        <fullName evidence="1">Phosphohexose isomerase</fullName>
        <shortName evidence="1">PHI</shortName>
    </alternativeName>
</protein>
<comment type="function">
    <text evidence="1">Catalyzes the reversible isomerization of glucose-6-phosphate to fructose-6-phosphate.</text>
</comment>
<comment type="catalytic activity">
    <reaction evidence="1">
        <text>alpha-D-glucose 6-phosphate = beta-D-fructose 6-phosphate</text>
        <dbReference type="Rhea" id="RHEA:11816"/>
        <dbReference type="ChEBI" id="CHEBI:57634"/>
        <dbReference type="ChEBI" id="CHEBI:58225"/>
        <dbReference type="EC" id="5.3.1.9"/>
    </reaction>
</comment>
<comment type="pathway">
    <text evidence="1">Carbohydrate biosynthesis; gluconeogenesis.</text>
</comment>
<comment type="pathway">
    <text evidence="1">Carbohydrate degradation; glycolysis; D-glyceraldehyde 3-phosphate and glycerone phosphate from D-glucose: step 2/4.</text>
</comment>
<comment type="subcellular location">
    <subcellularLocation>
        <location evidence="1">Cytoplasm</location>
    </subcellularLocation>
</comment>
<comment type="similarity">
    <text evidence="1">Belongs to the GPI family.</text>
</comment>
<comment type="sequence caution" evidence="2">
    <conflict type="erroneous initiation">
        <sequence resource="EMBL-CDS" id="CAK05997"/>
    </conflict>
</comment>